<protein>
    <recommendedName>
        <fullName>Vicilin-like seed storage protein At2g18540</fullName>
    </recommendedName>
    <alternativeName>
        <fullName>Globulin At2g18540</fullName>
    </alternativeName>
</protein>
<feature type="signal peptide" evidence="1">
    <location>
        <begin position="1"/>
        <end position="24"/>
    </location>
</feature>
<feature type="chain" id="PRO_5003309527" description="Vicilin-like seed storage protein At2g18540" evidence="1">
    <location>
        <begin position="25"/>
        <end position="707"/>
    </location>
</feature>
<feature type="domain" description="Cupin type-1 1" evidence="1">
    <location>
        <begin position="42"/>
        <end position="185"/>
    </location>
</feature>
<feature type="domain" description="Cupin type-1 2" evidence="1">
    <location>
        <begin position="247"/>
        <end position="403"/>
    </location>
</feature>
<feature type="region of interest" description="Disordered" evidence="3">
    <location>
        <begin position="439"/>
        <end position="707"/>
    </location>
</feature>
<feature type="compositionally biased region" description="Basic and acidic residues" evidence="3">
    <location>
        <begin position="439"/>
        <end position="696"/>
    </location>
</feature>
<feature type="compositionally biased region" description="Pro residues" evidence="3">
    <location>
        <begin position="698"/>
        <end position="707"/>
    </location>
</feature>
<feature type="glycosylation site" description="N-linked (GlcNAc...) asparagine" evidence="2">
    <location>
        <position position="60"/>
    </location>
</feature>
<feature type="glycosylation site" description="N-linked (GlcNAc...) asparagine" evidence="2">
    <location>
        <position position="203"/>
    </location>
</feature>
<feature type="glycosylation site" description="N-linked (GlcNAc...) asparagine" evidence="2">
    <location>
        <position position="285"/>
    </location>
</feature>
<feature type="glycosylation site" description="N-linked (GlcNAc...) asparagine" evidence="2">
    <location>
        <position position="356"/>
    </location>
</feature>
<feature type="glycosylation site" description="N-linked (GlcNAc...) asparagine" evidence="2">
    <location>
        <position position="396"/>
    </location>
</feature>
<feature type="glycosylation site" description="N-linked (GlcNAc...) asparagine" evidence="2">
    <location>
        <position position="399"/>
    </location>
</feature>
<gene>
    <name evidence="5" type="ordered locus">At2g18540</name>
    <name evidence="6" type="ORF">F24H14.11</name>
</gene>
<organism evidence="7">
    <name type="scientific">Arabidopsis thaliana</name>
    <name type="common">Mouse-ear cress</name>
    <dbReference type="NCBI Taxonomy" id="3702"/>
    <lineage>
        <taxon>Eukaryota</taxon>
        <taxon>Viridiplantae</taxon>
        <taxon>Streptophyta</taxon>
        <taxon>Embryophyta</taxon>
        <taxon>Tracheophyta</taxon>
        <taxon>Spermatophyta</taxon>
        <taxon>Magnoliopsida</taxon>
        <taxon>eudicotyledons</taxon>
        <taxon>Gunneridae</taxon>
        <taxon>Pentapetalae</taxon>
        <taxon>rosids</taxon>
        <taxon>malvids</taxon>
        <taxon>Brassicales</taxon>
        <taxon>Brassicaceae</taxon>
        <taxon>Camelineae</taxon>
        <taxon>Arabidopsis</taxon>
    </lineage>
</organism>
<accession>F4IQK5</accession>
<accession>Q9ZU69</accession>
<keyword id="KW-0175">Coiled coil</keyword>
<keyword id="KW-0325">Glycoprotein</keyword>
<keyword id="KW-1185">Reference proteome</keyword>
<keyword id="KW-0732">Signal</keyword>
<reference key="1">
    <citation type="journal article" date="1999" name="Nature">
        <title>Sequence and analysis of chromosome 2 of the plant Arabidopsis thaliana.</title>
        <authorList>
            <person name="Lin X."/>
            <person name="Kaul S."/>
            <person name="Rounsley S.D."/>
            <person name="Shea T.P."/>
            <person name="Benito M.-I."/>
            <person name="Town C.D."/>
            <person name="Fujii C.Y."/>
            <person name="Mason T.M."/>
            <person name="Bowman C.L."/>
            <person name="Barnstead M.E."/>
            <person name="Feldblyum T.V."/>
            <person name="Buell C.R."/>
            <person name="Ketchum K.A."/>
            <person name="Lee J.J."/>
            <person name="Ronning C.M."/>
            <person name="Koo H.L."/>
            <person name="Moffat K.S."/>
            <person name="Cronin L.A."/>
            <person name="Shen M."/>
            <person name="Pai G."/>
            <person name="Van Aken S."/>
            <person name="Umayam L."/>
            <person name="Tallon L.J."/>
            <person name="Gill J.E."/>
            <person name="Adams M.D."/>
            <person name="Carrera A.J."/>
            <person name="Creasy T.H."/>
            <person name="Goodman H.M."/>
            <person name="Somerville C.R."/>
            <person name="Copenhaver G.P."/>
            <person name="Preuss D."/>
            <person name="Nierman W.C."/>
            <person name="White O."/>
            <person name="Eisen J.A."/>
            <person name="Salzberg S.L."/>
            <person name="Fraser C.M."/>
            <person name="Venter J.C."/>
        </authorList>
    </citation>
    <scope>NUCLEOTIDE SEQUENCE [LARGE SCALE GENOMIC DNA]</scope>
    <source>
        <strain>cv. Columbia</strain>
    </source>
</reference>
<reference key="2">
    <citation type="journal article" date="2017" name="Plant J.">
        <title>Araport11: a complete reannotation of the Arabidopsis thaliana reference genome.</title>
        <authorList>
            <person name="Cheng C.Y."/>
            <person name="Krishnakumar V."/>
            <person name="Chan A.P."/>
            <person name="Thibaud-Nissen F."/>
            <person name="Schobel S."/>
            <person name="Town C.D."/>
        </authorList>
    </citation>
    <scope>GENOME REANNOTATION</scope>
    <source>
        <strain>cv. Columbia</strain>
    </source>
</reference>
<reference key="3">
    <citation type="journal article" date="2002" name="Plant Cell">
        <title>Redundant proteolytic mechanisms process seed storage proteins in the absence of seed-type members of the vacuolar processing enzyme family of cysteine proteases.</title>
        <authorList>
            <person name="Gruis D.F."/>
            <person name="Selinger D.A."/>
            <person name="Curran J.M."/>
            <person name="Jung R."/>
        </authorList>
    </citation>
    <scope>GENE FAMILY</scope>
</reference>
<sequence>MSRFRILPLSIFLCFVSLFFCTESFTHQNGVVPSFDPSYSSPLLVKKDQRTSVVATEFGNISAVQIGDGYHIQFITLEPNALLLPLLLHSDMVFFVHTGTGILNWIDEESERKLELRRGDVFRLRSGTVFYVHSNEKLRVYAIFNVGKCLNDPCLGAYSSVRDLLLGFDDRTLRSAFAVPEDILRKIRDATKPPLIVNALPRNRTQGLEEDKWQSRLVRLFVSVEDVTDHLAMKPIVDTNKKKSRTFNVFEEDPDFENNNGRSIVVDEKDLDALKGSRFGVFMVNLTKGSMIGPHWNPSACEISIVLEGEGMVRVVNQQSLSSCKNDRKSESFMVEEGDVFVVPKFHPMAQMSFENSSFVFMGFSTSAKTNHPQFLVGQSSVLKVLDRDVVAVSFNLSNETIKGLLKAQKESVIFECASCAEGELSKLMREIEERKRREEEEIERRRKEEEEARKREEAKRREEEEAKRREEEETERKKREEEEARKREEERKREEEEAKRREEERKKREEEAEQARKREEEREKEEEMAKKREEERQRKEREEVERKRREEQERKRREEEARKREEERKREEEMAKRREQERQRKEREEVERKIREEQERKREEEMAKRREQERQKKEREEMERKKREEEARKREEEMAKIREEERQRKEREDVERKRREEEAMRREEERKREEEAAKRAEEERRKKEEEEEKRRWPPQPKPPEEI</sequence>
<name>VCL21_ARATH</name>
<dbReference type="EMBL" id="AC006135">
    <property type="protein sequence ID" value="AAD12213.1"/>
    <property type="status" value="ALT_SEQ"/>
    <property type="molecule type" value="Genomic_DNA"/>
</dbReference>
<dbReference type="EMBL" id="CP002685">
    <property type="protein sequence ID" value="AEC06779.1"/>
    <property type="molecule type" value="Genomic_DNA"/>
</dbReference>
<dbReference type="PIR" id="E84565">
    <property type="entry name" value="E84565"/>
</dbReference>
<dbReference type="RefSeq" id="NP_179444.2">
    <property type="nucleotide sequence ID" value="NM_127410.3"/>
</dbReference>
<dbReference type="SMR" id="F4IQK5"/>
<dbReference type="FunCoup" id="F4IQK5">
    <property type="interactions" value="104"/>
</dbReference>
<dbReference type="STRING" id="3702.F4IQK5"/>
<dbReference type="GlyGen" id="F4IQK5">
    <property type="glycosylation" value="6 sites"/>
</dbReference>
<dbReference type="PaxDb" id="3702-AT2G18540.1"/>
<dbReference type="ProMEX" id="F4IQK5"/>
<dbReference type="ProteomicsDB" id="243226"/>
<dbReference type="EnsemblPlants" id="AT2G18540.1">
    <property type="protein sequence ID" value="AT2G18540.1"/>
    <property type="gene ID" value="AT2G18540"/>
</dbReference>
<dbReference type="GeneID" id="816369"/>
<dbReference type="Gramene" id="AT2G18540.1">
    <property type="protein sequence ID" value="AT2G18540.1"/>
    <property type="gene ID" value="AT2G18540"/>
</dbReference>
<dbReference type="KEGG" id="ath:AT2G18540"/>
<dbReference type="Araport" id="AT2G18540"/>
<dbReference type="TAIR" id="AT2G18540"/>
<dbReference type="eggNOG" id="ENOG502QS4V">
    <property type="taxonomic scope" value="Eukaryota"/>
</dbReference>
<dbReference type="HOGENOM" id="CLU_027536_1_0_1"/>
<dbReference type="InParanoid" id="F4IQK5"/>
<dbReference type="PRO" id="PR:F4IQK5"/>
<dbReference type="Proteomes" id="UP000006548">
    <property type="component" value="Chromosome 2"/>
</dbReference>
<dbReference type="ExpressionAtlas" id="F4IQK5">
    <property type="expression patterns" value="baseline and differential"/>
</dbReference>
<dbReference type="CDD" id="cd02245">
    <property type="entry name" value="cupin_7S_vicilin-like_C"/>
    <property type="match status" value="1"/>
</dbReference>
<dbReference type="CDD" id="cd02244">
    <property type="entry name" value="cupin_7S_vicilin-like_N"/>
    <property type="match status" value="1"/>
</dbReference>
<dbReference type="Gene3D" id="2.60.120.10">
    <property type="entry name" value="Jelly Rolls"/>
    <property type="match status" value="2"/>
</dbReference>
<dbReference type="InterPro" id="IPR006045">
    <property type="entry name" value="Cupin_1"/>
</dbReference>
<dbReference type="InterPro" id="IPR014710">
    <property type="entry name" value="RmlC-like_jellyroll"/>
</dbReference>
<dbReference type="InterPro" id="IPR011051">
    <property type="entry name" value="RmlC_Cupin_sf"/>
</dbReference>
<dbReference type="InterPro" id="IPR050253">
    <property type="entry name" value="Seed_Storage-Functional"/>
</dbReference>
<dbReference type="PANTHER" id="PTHR31189:SF7">
    <property type="entry name" value="OS03G0197300 PROTEIN"/>
    <property type="match status" value="1"/>
</dbReference>
<dbReference type="PANTHER" id="PTHR31189">
    <property type="entry name" value="OS03G0336100 PROTEIN-RELATED"/>
    <property type="match status" value="1"/>
</dbReference>
<dbReference type="Pfam" id="PF00190">
    <property type="entry name" value="Cupin_1"/>
    <property type="match status" value="1"/>
</dbReference>
<dbReference type="SMART" id="SM00835">
    <property type="entry name" value="Cupin_1"/>
    <property type="match status" value="2"/>
</dbReference>
<dbReference type="SUPFAM" id="SSF51182">
    <property type="entry name" value="RmlC-like cupins"/>
    <property type="match status" value="1"/>
</dbReference>
<evidence type="ECO:0000255" key="1"/>
<evidence type="ECO:0000255" key="2">
    <source>
        <dbReference type="PROSITE-ProRule" id="PRU00498"/>
    </source>
</evidence>
<evidence type="ECO:0000256" key="3">
    <source>
        <dbReference type="SAM" id="MobiDB-lite"/>
    </source>
</evidence>
<evidence type="ECO:0000305" key="4"/>
<evidence type="ECO:0000312" key="5">
    <source>
        <dbReference type="Araport" id="AT2G18540"/>
    </source>
</evidence>
<evidence type="ECO:0000312" key="6">
    <source>
        <dbReference type="EMBL" id="AAD12213.1"/>
    </source>
</evidence>
<evidence type="ECO:0000312" key="7">
    <source>
        <dbReference type="Proteomes" id="UP000006548"/>
    </source>
</evidence>
<proteinExistence type="inferred from homology"/>
<comment type="function">
    <text evidence="4">Seed storage protein.</text>
</comment>
<comment type="similarity">
    <text evidence="4">Belongs to the 7S seed storage protein family.</text>
</comment>
<comment type="sequence caution" evidence="4">
    <conflict type="erroneous gene model prediction">
        <sequence resource="EMBL-CDS" id="AAD12213"/>
    </conflict>
</comment>